<proteinExistence type="inferred from homology"/>
<name>YBL1_ENCCU</name>
<reference key="1">
    <citation type="journal article" date="2001" name="Nature">
        <title>Genome sequence and gene compaction of the eukaryote parasite Encephalitozoon cuniculi.</title>
        <authorList>
            <person name="Katinka M.D."/>
            <person name="Duprat S."/>
            <person name="Cornillot E."/>
            <person name="Metenier G."/>
            <person name="Thomarat F."/>
            <person name="Prensier G."/>
            <person name="Barbe V."/>
            <person name="Peyretaillade E."/>
            <person name="Brottier P."/>
            <person name="Wincker P."/>
            <person name="Delbac F."/>
            <person name="El Alaoui H."/>
            <person name="Peyret P."/>
            <person name="Saurin W."/>
            <person name="Gouy M."/>
            <person name="Weissenbach J."/>
            <person name="Vivares C.P."/>
        </authorList>
    </citation>
    <scope>NUCLEOTIDE SEQUENCE [LARGE SCALE GENOMIC DNA]</scope>
    <source>
        <strain>GB-M1</strain>
    </source>
</reference>
<accession>Q8STZ0</accession>
<protein>
    <recommendedName>
        <fullName>UPF0328 protein ECU11_2110</fullName>
    </recommendedName>
</protein>
<gene>
    <name type="ordered locus">ECU11_2110</name>
</gene>
<comment type="similarity">
    <text evidence="1">Belongs to the UPF0328 family.</text>
</comment>
<feature type="chain" id="PRO_0000223143" description="UPF0328 protein ECU11_2110">
    <location>
        <begin position="1"/>
        <end position="221"/>
    </location>
</feature>
<evidence type="ECO:0000305" key="1"/>
<sequence>MYFILTKDSFKDSPFLKFITVLLPYLHPPVLHLLLLHTNWRKTHKSKHTILYCLVNLLLLAFAVANILSIVALIVDKQKRTDDLLLHSIILPSFFIPPAYLLSTSCCLVPGQIGFTDTGINVIIDILILICPAISLVLVDEKSKYYPYSTAIPSILILVRLFREKCSPPKQSSPPIPTWRVAAFVFILVLAVLVYGLLGSGSIITLYDHFHPPKGADATSS</sequence>
<keyword id="KW-1185">Reference proteome</keyword>
<organism>
    <name type="scientific">Encephalitozoon cuniculi (strain GB-M1)</name>
    <name type="common">Microsporidian parasite</name>
    <dbReference type="NCBI Taxonomy" id="284813"/>
    <lineage>
        <taxon>Eukaryota</taxon>
        <taxon>Fungi</taxon>
        <taxon>Fungi incertae sedis</taxon>
        <taxon>Microsporidia</taxon>
        <taxon>Unikaryonidae</taxon>
        <taxon>Encephalitozoon</taxon>
    </lineage>
</organism>
<dbReference type="EMBL" id="AL590450">
    <property type="protein sequence ID" value="CAD26121.1"/>
    <property type="molecule type" value="Genomic_DNA"/>
</dbReference>
<dbReference type="RefSeq" id="NP_586517.1">
    <property type="nucleotide sequence ID" value="NM_001042350.1"/>
</dbReference>
<dbReference type="GeneID" id="860171"/>
<dbReference type="KEGG" id="ecu:ECU11_2110"/>
<dbReference type="VEuPathDB" id="MicrosporidiaDB:ECU11_2110"/>
<dbReference type="HOGENOM" id="CLU_059413_0_0_1"/>
<dbReference type="InParanoid" id="Q8STZ0"/>
<dbReference type="Proteomes" id="UP000000819">
    <property type="component" value="Chromosome XI"/>
</dbReference>
<dbReference type="InterPro" id="IPR019081">
    <property type="entry name" value="UPF0328"/>
</dbReference>
<dbReference type="Pfam" id="PF09591">
    <property type="entry name" value="DUF2463"/>
    <property type="match status" value="1"/>
</dbReference>